<organism>
    <name type="scientific">Saccharomyces cerevisiae (strain ATCC 204508 / S288c)</name>
    <name type="common">Baker's yeast</name>
    <dbReference type="NCBI Taxonomy" id="559292"/>
    <lineage>
        <taxon>Eukaryota</taxon>
        <taxon>Fungi</taxon>
        <taxon>Dikarya</taxon>
        <taxon>Ascomycota</taxon>
        <taxon>Saccharomycotina</taxon>
        <taxon>Saccharomycetes</taxon>
        <taxon>Saccharomycetales</taxon>
        <taxon>Saccharomycetaceae</taxon>
        <taxon>Saccharomyces</taxon>
    </lineage>
</organism>
<proteinExistence type="predicted"/>
<gene>
    <name type="primary">RRT6</name>
    <name type="ordered locus">YGL146C</name>
</gene>
<evidence type="ECO:0000255" key="1"/>
<evidence type="ECO:0000269" key="2">
    <source>
    </source>
</evidence>
<evidence type="ECO:0000305" key="3"/>
<keyword id="KW-0472">Membrane</keyword>
<keyword id="KW-1185">Reference proteome</keyword>
<keyword id="KW-0804">Transcription</keyword>
<keyword id="KW-0805">Transcription regulation</keyword>
<keyword id="KW-0812">Transmembrane</keyword>
<keyword id="KW-1133">Transmembrane helix</keyword>
<sequence>MEKASLNIAQTKEIPLTDRRMGLRGWKACSRPHLLGRILLFMSILFITSAELSSDVSSREVYMPIFNNKLSFKVPPIKRSLLLGAALYEDFEYSSNNSASDGAFCTVFNAGMNDASREVVFEIHVMDVLQEETDSSRFGGTSHERGRQSLGFSVFNNKNGDLLRSKKNLASGTSVIEVNPGNCNEFLICFINLVYDGSWSSIDTEKSVTIKMTYNDKLDPDMLLHLVNQMTPQVVKALNTVSDGLFQIVSDTTLLQMESDRRDINEATYSYLIVGFVSLMVAQLISNIIVTTYLIIKIKSNPSSHIKKKGL</sequence>
<comment type="function">
    <text evidence="2">May be involved in the modulation of rDNA transcription.</text>
</comment>
<comment type="subcellular location">
    <subcellularLocation>
        <location evidence="3">Membrane</location>
        <topology evidence="3">Multi-pass membrane protein</topology>
    </subcellularLocation>
</comment>
<accession>P53117</accession>
<accession>D6VU03</accession>
<reference key="1">
    <citation type="journal article" date="1997" name="Yeast">
        <title>The sequence of a nearly unclonable 22.8 kb segment on the left arm chromosome VII from Saccharomyces cerevisiae reveals ARO2, RPL9A, TIP1, MRF1 genes and six new open reading frames.</title>
        <authorList>
            <person name="Voet M."/>
            <person name="Defoor E."/>
            <person name="Verhasselt P."/>
            <person name="Riles L."/>
            <person name="Robben J."/>
            <person name="Volckaert G."/>
        </authorList>
    </citation>
    <scope>NUCLEOTIDE SEQUENCE [GENOMIC DNA]</scope>
    <source>
        <strain>ATCC 96604 / S288c / FY1679</strain>
    </source>
</reference>
<reference key="2">
    <citation type="journal article" date="1997" name="Nature">
        <title>The nucleotide sequence of Saccharomyces cerevisiae chromosome VII.</title>
        <authorList>
            <person name="Tettelin H."/>
            <person name="Agostoni-Carbone M.L."/>
            <person name="Albermann K."/>
            <person name="Albers M."/>
            <person name="Arroyo J."/>
            <person name="Backes U."/>
            <person name="Barreiros T."/>
            <person name="Bertani I."/>
            <person name="Bjourson A.J."/>
            <person name="Brueckner M."/>
            <person name="Bruschi C.V."/>
            <person name="Carignani G."/>
            <person name="Castagnoli L."/>
            <person name="Cerdan E."/>
            <person name="Clemente M.L."/>
            <person name="Coblenz A."/>
            <person name="Coglievina M."/>
            <person name="Coissac E."/>
            <person name="Defoor E."/>
            <person name="Del Bino S."/>
            <person name="Delius H."/>
            <person name="Delneri D."/>
            <person name="de Wergifosse P."/>
            <person name="Dujon B."/>
            <person name="Durand P."/>
            <person name="Entian K.-D."/>
            <person name="Eraso P."/>
            <person name="Escribano V."/>
            <person name="Fabiani L."/>
            <person name="Fartmann B."/>
            <person name="Feroli F."/>
            <person name="Feuermann M."/>
            <person name="Frontali L."/>
            <person name="Garcia-Gonzalez M."/>
            <person name="Garcia-Saez M.I."/>
            <person name="Goffeau A."/>
            <person name="Guerreiro P."/>
            <person name="Hani J."/>
            <person name="Hansen M."/>
            <person name="Hebling U."/>
            <person name="Hernandez K."/>
            <person name="Heumann K."/>
            <person name="Hilger F."/>
            <person name="Hofmann B."/>
            <person name="Indge K.J."/>
            <person name="James C.M."/>
            <person name="Klima R."/>
            <person name="Koetter P."/>
            <person name="Kramer B."/>
            <person name="Kramer W."/>
            <person name="Lauquin G."/>
            <person name="Leuther H."/>
            <person name="Louis E.J."/>
            <person name="Maillier E."/>
            <person name="Marconi A."/>
            <person name="Martegani E."/>
            <person name="Mazon M.J."/>
            <person name="Mazzoni C."/>
            <person name="McReynolds A.D.K."/>
            <person name="Melchioretto P."/>
            <person name="Mewes H.-W."/>
            <person name="Minenkova O."/>
            <person name="Mueller-Auer S."/>
            <person name="Nawrocki A."/>
            <person name="Netter P."/>
            <person name="Neu R."/>
            <person name="Nombela C."/>
            <person name="Oliver S.G."/>
            <person name="Panzeri L."/>
            <person name="Paoluzi S."/>
            <person name="Plevani P."/>
            <person name="Portetelle D."/>
            <person name="Portillo F."/>
            <person name="Potier S."/>
            <person name="Purnelle B."/>
            <person name="Rieger M."/>
            <person name="Riles L."/>
            <person name="Rinaldi T."/>
            <person name="Robben J."/>
            <person name="Rodrigues-Pousada C."/>
            <person name="Rodriguez-Belmonte E."/>
            <person name="Rodriguez-Torres A.M."/>
            <person name="Rose M."/>
            <person name="Ruzzi M."/>
            <person name="Saliola M."/>
            <person name="Sanchez-Perez M."/>
            <person name="Schaefer B."/>
            <person name="Schaefer M."/>
            <person name="Scharfe M."/>
            <person name="Schmidheini T."/>
            <person name="Schreer A."/>
            <person name="Skala J."/>
            <person name="Souciet J.-L."/>
            <person name="Steensma H.Y."/>
            <person name="Talla E."/>
            <person name="Thierry A."/>
            <person name="Vandenbol M."/>
            <person name="van der Aart Q.J.M."/>
            <person name="Van Dyck L."/>
            <person name="Vanoni M."/>
            <person name="Verhasselt P."/>
            <person name="Voet M."/>
            <person name="Volckaert G."/>
            <person name="Wambutt R."/>
            <person name="Watson M.D."/>
            <person name="Weber N."/>
            <person name="Wedler E."/>
            <person name="Wedler H."/>
            <person name="Wipfli P."/>
            <person name="Wolf K."/>
            <person name="Wright L.F."/>
            <person name="Zaccaria P."/>
            <person name="Zimmermann M."/>
            <person name="Zollner A."/>
            <person name="Kleine K."/>
        </authorList>
    </citation>
    <scope>NUCLEOTIDE SEQUENCE [LARGE SCALE GENOMIC DNA]</scope>
    <source>
        <strain>ATCC 204508 / S288c</strain>
    </source>
</reference>
<reference key="3">
    <citation type="journal article" date="2014" name="G3 (Bethesda)">
        <title>The reference genome sequence of Saccharomyces cerevisiae: Then and now.</title>
        <authorList>
            <person name="Engel S.R."/>
            <person name="Dietrich F.S."/>
            <person name="Fisk D.G."/>
            <person name="Binkley G."/>
            <person name="Balakrishnan R."/>
            <person name="Costanzo M.C."/>
            <person name="Dwight S.S."/>
            <person name="Hitz B.C."/>
            <person name="Karra K."/>
            <person name="Nash R.S."/>
            <person name="Weng S."/>
            <person name="Wong E.D."/>
            <person name="Lloyd P."/>
            <person name="Skrzypek M.S."/>
            <person name="Miyasato S.R."/>
            <person name="Simison M."/>
            <person name="Cherry J.M."/>
        </authorList>
    </citation>
    <scope>GENOME REANNOTATION</scope>
    <source>
        <strain>ATCC 204508 / S288c</strain>
    </source>
</reference>
<reference key="4">
    <citation type="journal article" date="2007" name="Genome Res.">
        <title>Approaching a complete repository of sequence-verified protein-encoding clones for Saccharomyces cerevisiae.</title>
        <authorList>
            <person name="Hu Y."/>
            <person name="Rolfs A."/>
            <person name="Bhullar B."/>
            <person name="Murthy T.V.S."/>
            <person name="Zhu C."/>
            <person name="Berger M.F."/>
            <person name="Camargo A.A."/>
            <person name="Kelley F."/>
            <person name="McCarron S."/>
            <person name="Jepson D."/>
            <person name="Richardson A."/>
            <person name="Raphael J."/>
            <person name="Moreira D."/>
            <person name="Taycher E."/>
            <person name="Zuo D."/>
            <person name="Mohr S."/>
            <person name="Kane M.F."/>
            <person name="Williamson J."/>
            <person name="Simpson A.J.G."/>
            <person name="Bulyk M.L."/>
            <person name="Harlow E."/>
            <person name="Marsischky G."/>
            <person name="Kolodner R.D."/>
            <person name="LaBaer J."/>
        </authorList>
    </citation>
    <scope>NUCLEOTIDE SEQUENCE [GENOMIC DNA]</scope>
    <source>
        <strain>ATCC 204508 / S288c</strain>
    </source>
</reference>
<reference key="5">
    <citation type="journal article" date="2009" name="Genetics">
        <title>Genetic identification of factors that modulate ribosomal DNA transcription in Saccharomyces cerevisiae.</title>
        <authorList>
            <person name="Hontz R.D."/>
            <person name="Niederer R.O."/>
            <person name="Johnson J.M."/>
            <person name="Smith J.S."/>
        </authorList>
    </citation>
    <scope>FUNCTION</scope>
</reference>
<name>RRT6_YEAST</name>
<protein>
    <recommendedName>
        <fullName>Regulator of rDNA transcription protein 6</fullName>
    </recommendedName>
</protein>
<feature type="chain" id="PRO_0000202734" description="Regulator of rDNA transcription protein 6">
    <location>
        <begin position="1"/>
        <end position="311"/>
    </location>
</feature>
<feature type="transmembrane region" description="Helical" evidence="1">
    <location>
        <begin position="32"/>
        <end position="52"/>
    </location>
</feature>
<feature type="transmembrane region" description="Helical" evidence="1">
    <location>
        <begin position="271"/>
        <end position="291"/>
    </location>
</feature>
<dbReference type="EMBL" id="X99960">
    <property type="protein sequence ID" value="CAA68216.1"/>
    <property type="molecule type" value="Genomic_DNA"/>
</dbReference>
<dbReference type="EMBL" id="Z72668">
    <property type="protein sequence ID" value="CAA96858.1"/>
    <property type="molecule type" value="Genomic_DNA"/>
</dbReference>
<dbReference type="EMBL" id="AY558502">
    <property type="protein sequence ID" value="AAS56828.1"/>
    <property type="molecule type" value="Genomic_DNA"/>
</dbReference>
<dbReference type="EMBL" id="BK006941">
    <property type="protein sequence ID" value="DAA07964.1"/>
    <property type="molecule type" value="Genomic_DNA"/>
</dbReference>
<dbReference type="PIR" id="S64160">
    <property type="entry name" value="S64160"/>
</dbReference>
<dbReference type="RefSeq" id="NP_011369.1">
    <property type="nucleotide sequence ID" value="NM_001181011.1"/>
</dbReference>
<dbReference type="SMR" id="P53117"/>
<dbReference type="BioGRID" id="33106">
    <property type="interactions" value="51"/>
</dbReference>
<dbReference type="DIP" id="DIP-6371N"/>
<dbReference type="FunCoup" id="P53117">
    <property type="interactions" value="78"/>
</dbReference>
<dbReference type="IntAct" id="P53117">
    <property type="interactions" value="2"/>
</dbReference>
<dbReference type="STRING" id="4932.YGL146C"/>
<dbReference type="PaxDb" id="4932-YGL146C"/>
<dbReference type="PeptideAtlas" id="P53117"/>
<dbReference type="EnsemblFungi" id="YGL146C_mRNA">
    <property type="protein sequence ID" value="YGL146C"/>
    <property type="gene ID" value="YGL146C"/>
</dbReference>
<dbReference type="GeneID" id="852731"/>
<dbReference type="KEGG" id="sce:YGL146C"/>
<dbReference type="AGR" id="SGD:S000003114"/>
<dbReference type="SGD" id="S000003114">
    <property type="gene designation" value="RRT6"/>
</dbReference>
<dbReference type="VEuPathDB" id="FungiDB:YGL146C"/>
<dbReference type="eggNOG" id="ENOG502S8MW">
    <property type="taxonomic scope" value="Eukaryota"/>
</dbReference>
<dbReference type="HOGENOM" id="CLU_1116284_0_0_1"/>
<dbReference type="InParanoid" id="P53117"/>
<dbReference type="OMA" id="FEFCFQN"/>
<dbReference type="OrthoDB" id="4063755at2759"/>
<dbReference type="BioCyc" id="YEAST:G3O-30640-MONOMER"/>
<dbReference type="BioGRID-ORCS" id="852731">
    <property type="hits" value="3 hits in 10 CRISPR screens"/>
</dbReference>
<dbReference type="PRO" id="PR:P53117"/>
<dbReference type="Proteomes" id="UP000002311">
    <property type="component" value="Chromosome VII"/>
</dbReference>
<dbReference type="RNAct" id="P53117">
    <property type="molecule type" value="protein"/>
</dbReference>
<dbReference type="GO" id="GO:0016020">
    <property type="term" value="C:membrane"/>
    <property type="evidence" value="ECO:0000303"/>
    <property type="project" value="SGD"/>
</dbReference>
<dbReference type="InterPro" id="IPR009038">
    <property type="entry name" value="GOLD_dom"/>
</dbReference>
<dbReference type="Pfam" id="PF01105">
    <property type="entry name" value="EMP24_GP25L"/>
    <property type="match status" value="1"/>
</dbReference>